<comment type="function">
    <text evidence="1">Catalyzes the reversible transfer of the terminal phosphate group between ATP and AMP. Plays an important role in cellular energy homeostasis and in adenine nucleotide metabolism.</text>
</comment>
<comment type="catalytic activity">
    <reaction evidence="1">
        <text>AMP + ATP = 2 ADP</text>
        <dbReference type="Rhea" id="RHEA:12973"/>
        <dbReference type="ChEBI" id="CHEBI:30616"/>
        <dbReference type="ChEBI" id="CHEBI:456215"/>
        <dbReference type="ChEBI" id="CHEBI:456216"/>
        <dbReference type="EC" id="2.7.4.3"/>
    </reaction>
</comment>
<comment type="pathway">
    <text evidence="1">Purine metabolism; AMP biosynthesis via salvage pathway; AMP from ADP: step 1/1.</text>
</comment>
<comment type="subunit">
    <text evidence="1">Monomer.</text>
</comment>
<comment type="subcellular location">
    <subcellularLocation>
        <location evidence="1">Cytoplasm</location>
    </subcellularLocation>
</comment>
<comment type="domain">
    <text evidence="1">Consists of three domains, a large central CORE domain and two small peripheral domains, NMPbind and LID, which undergo movements during catalysis. The LID domain closes over the site of phosphoryl transfer upon ATP binding. Assembling and dissambling the active center during each catalytic cycle provides an effective means to prevent ATP hydrolysis. Some bacteria have evolved a zinc-coordinating structure that stabilizes the LID domain.</text>
</comment>
<comment type="similarity">
    <text evidence="1">Belongs to the adenylate kinase family.</text>
</comment>
<accession>O58844</accession>
<evidence type="ECO:0000255" key="1">
    <source>
        <dbReference type="HAMAP-Rule" id="MF_00235"/>
    </source>
</evidence>
<gene>
    <name evidence="1" type="primary">adk</name>
    <name type="ordered locus">PH1117</name>
</gene>
<sequence length="220" mass="25500">MNILIFGPPGSGKSTQARRITERYGLTYISSGDIIRAEISSRTPLGLEMEKYLSRGDLIPDTIVNTLIISKLRRVRENFIMDGYPRTPEQVIALENYLYDHGIKIDVAIDIFITKEESVRRISGRRICSKCGAVYHIEFNPPKIPGKCDICGGDLIQRPDDRPEIVEKRYDIYMRNMEPIIKFYQKQGIYVKIDGHGSINEVWERIRPLLDYIYNTRSRR</sequence>
<protein>
    <recommendedName>
        <fullName evidence="1">Adenylate kinase</fullName>
        <shortName evidence="1">AK</shortName>
        <ecNumber evidence="1">2.7.4.3</ecNumber>
    </recommendedName>
    <alternativeName>
        <fullName evidence="1">ATP-AMP transphosphorylase</fullName>
    </alternativeName>
    <alternativeName>
        <fullName evidence="1">ATP:AMP phosphotransferase</fullName>
    </alternativeName>
    <alternativeName>
        <fullName evidence="1">Adenylate monophosphate kinase</fullName>
    </alternativeName>
</protein>
<dbReference type="EC" id="2.7.4.3" evidence="1"/>
<dbReference type="EMBL" id="BA000001">
    <property type="protein sequence ID" value="BAA30216.1"/>
    <property type="molecule type" value="Genomic_DNA"/>
</dbReference>
<dbReference type="PIR" id="F71052">
    <property type="entry name" value="F71052"/>
</dbReference>
<dbReference type="RefSeq" id="WP_010885201.1">
    <property type="nucleotide sequence ID" value="NC_000961.1"/>
</dbReference>
<dbReference type="SMR" id="O58844"/>
<dbReference type="STRING" id="70601.gene:9378076"/>
<dbReference type="EnsemblBacteria" id="BAA30216">
    <property type="protein sequence ID" value="BAA30216"/>
    <property type="gene ID" value="BAA30216"/>
</dbReference>
<dbReference type="GeneID" id="1443436"/>
<dbReference type="KEGG" id="pho:PH1117"/>
<dbReference type="eggNOG" id="arCOG01046">
    <property type="taxonomic scope" value="Archaea"/>
</dbReference>
<dbReference type="OrthoDB" id="31230at2157"/>
<dbReference type="UniPathway" id="UPA00588">
    <property type="reaction ID" value="UER00649"/>
</dbReference>
<dbReference type="Proteomes" id="UP000000752">
    <property type="component" value="Chromosome"/>
</dbReference>
<dbReference type="GO" id="GO:0005737">
    <property type="term" value="C:cytoplasm"/>
    <property type="evidence" value="ECO:0007669"/>
    <property type="project" value="UniProtKB-SubCell"/>
</dbReference>
<dbReference type="GO" id="GO:0004017">
    <property type="term" value="F:adenylate kinase activity"/>
    <property type="evidence" value="ECO:0007669"/>
    <property type="project" value="UniProtKB-UniRule"/>
</dbReference>
<dbReference type="GO" id="GO:0005524">
    <property type="term" value="F:ATP binding"/>
    <property type="evidence" value="ECO:0007669"/>
    <property type="project" value="UniProtKB-UniRule"/>
</dbReference>
<dbReference type="GO" id="GO:0008270">
    <property type="term" value="F:zinc ion binding"/>
    <property type="evidence" value="ECO:0007669"/>
    <property type="project" value="UniProtKB-UniRule"/>
</dbReference>
<dbReference type="GO" id="GO:0044209">
    <property type="term" value="P:AMP salvage"/>
    <property type="evidence" value="ECO:0007669"/>
    <property type="project" value="UniProtKB-UniRule"/>
</dbReference>
<dbReference type="CDD" id="cd01428">
    <property type="entry name" value="ADK"/>
    <property type="match status" value="1"/>
</dbReference>
<dbReference type="FunFam" id="3.40.50.300:FF:000106">
    <property type="entry name" value="Adenylate kinase mitochondrial"/>
    <property type="match status" value="1"/>
</dbReference>
<dbReference type="Gene3D" id="3.40.50.300">
    <property type="entry name" value="P-loop containing nucleotide triphosphate hydrolases"/>
    <property type="match status" value="1"/>
</dbReference>
<dbReference type="HAMAP" id="MF_00235">
    <property type="entry name" value="Adenylate_kinase_Adk"/>
    <property type="match status" value="1"/>
</dbReference>
<dbReference type="InterPro" id="IPR006259">
    <property type="entry name" value="Adenyl_kin_sub"/>
</dbReference>
<dbReference type="InterPro" id="IPR000850">
    <property type="entry name" value="Adenylat/UMP-CMP_kin"/>
</dbReference>
<dbReference type="InterPro" id="IPR033690">
    <property type="entry name" value="Adenylat_kinase_CS"/>
</dbReference>
<dbReference type="InterPro" id="IPR007862">
    <property type="entry name" value="Adenylate_kinase_lid-dom"/>
</dbReference>
<dbReference type="InterPro" id="IPR027417">
    <property type="entry name" value="P-loop_NTPase"/>
</dbReference>
<dbReference type="NCBIfam" id="TIGR01351">
    <property type="entry name" value="adk"/>
    <property type="match status" value="1"/>
</dbReference>
<dbReference type="NCBIfam" id="NF001387">
    <property type="entry name" value="PRK00279.2-5"/>
    <property type="match status" value="1"/>
</dbReference>
<dbReference type="PANTHER" id="PTHR23359">
    <property type="entry name" value="NUCLEOTIDE KINASE"/>
    <property type="match status" value="1"/>
</dbReference>
<dbReference type="Pfam" id="PF00406">
    <property type="entry name" value="ADK"/>
    <property type="match status" value="1"/>
</dbReference>
<dbReference type="Pfam" id="PF05191">
    <property type="entry name" value="ADK_lid"/>
    <property type="match status" value="1"/>
</dbReference>
<dbReference type="PRINTS" id="PR00094">
    <property type="entry name" value="ADENYLTKNASE"/>
</dbReference>
<dbReference type="SUPFAM" id="SSF52540">
    <property type="entry name" value="P-loop containing nucleoside triphosphate hydrolases"/>
    <property type="match status" value="1"/>
</dbReference>
<dbReference type="PROSITE" id="PS00113">
    <property type="entry name" value="ADENYLATE_KINASE"/>
    <property type="match status" value="1"/>
</dbReference>
<feature type="chain" id="PRO_0000158903" description="Adenylate kinase">
    <location>
        <begin position="1"/>
        <end position="220"/>
    </location>
</feature>
<feature type="region of interest" description="NMP" evidence="1">
    <location>
        <begin position="30"/>
        <end position="59"/>
    </location>
</feature>
<feature type="region of interest" description="LID" evidence="1">
    <location>
        <begin position="124"/>
        <end position="161"/>
    </location>
</feature>
<feature type="binding site" evidence="1">
    <location>
        <begin position="10"/>
        <end position="15"/>
    </location>
    <ligand>
        <name>ATP</name>
        <dbReference type="ChEBI" id="CHEBI:30616"/>
    </ligand>
</feature>
<feature type="binding site" evidence="1">
    <location>
        <position position="31"/>
    </location>
    <ligand>
        <name>AMP</name>
        <dbReference type="ChEBI" id="CHEBI:456215"/>
    </ligand>
</feature>
<feature type="binding site" evidence="1">
    <location>
        <position position="36"/>
    </location>
    <ligand>
        <name>AMP</name>
        <dbReference type="ChEBI" id="CHEBI:456215"/>
    </ligand>
</feature>
<feature type="binding site" evidence="1">
    <location>
        <begin position="57"/>
        <end position="59"/>
    </location>
    <ligand>
        <name>AMP</name>
        <dbReference type="ChEBI" id="CHEBI:456215"/>
    </ligand>
</feature>
<feature type="binding site" evidence="1">
    <location>
        <begin position="83"/>
        <end position="86"/>
    </location>
    <ligand>
        <name>AMP</name>
        <dbReference type="ChEBI" id="CHEBI:456215"/>
    </ligand>
</feature>
<feature type="binding site" evidence="1">
    <location>
        <position position="90"/>
    </location>
    <ligand>
        <name>AMP</name>
        <dbReference type="ChEBI" id="CHEBI:456215"/>
    </ligand>
</feature>
<feature type="binding site" evidence="1">
    <location>
        <position position="125"/>
    </location>
    <ligand>
        <name>ATP</name>
        <dbReference type="ChEBI" id="CHEBI:30616"/>
    </ligand>
</feature>
<feature type="binding site" evidence="1">
    <location>
        <position position="128"/>
    </location>
    <ligand>
        <name>Zn(2+)</name>
        <dbReference type="ChEBI" id="CHEBI:29105"/>
        <note>structural</note>
    </ligand>
</feature>
<feature type="binding site" evidence="1">
    <location>
        <position position="131"/>
    </location>
    <ligand>
        <name>Zn(2+)</name>
        <dbReference type="ChEBI" id="CHEBI:29105"/>
        <note>structural</note>
    </ligand>
</feature>
<feature type="binding site" evidence="1">
    <location>
        <begin position="134"/>
        <end position="135"/>
    </location>
    <ligand>
        <name>ATP</name>
        <dbReference type="ChEBI" id="CHEBI:30616"/>
    </ligand>
</feature>
<feature type="binding site" evidence="1">
    <location>
        <position position="148"/>
    </location>
    <ligand>
        <name>Zn(2+)</name>
        <dbReference type="ChEBI" id="CHEBI:29105"/>
        <note>structural</note>
    </ligand>
</feature>
<feature type="binding site" evidence="1">
    <location>
        <position position="151"/>
    </location>
    <ligand>
        <name>Zn(2+)</name>
        <dbReference type="ChEBI" id="CHEBI:29105"/>
        <note>structural</note>
    </ligand>
</feature>
<feature type="binding site" evidence="1">
    <location>
        <position position="158"/>
    </location>
    <ligand>
        <name>AMP</name>
        <dbReference type="ChEBI" id="CHEBI:456215"/>
    </ligand>
</feature>
<feature type="binding site" evidence="1">
    <location>
        <position position="169"/>
    </location>
    <ligand>
        <name>AMP</name>
        <dbReference type="ChEBI" id="CHEBI:456215"/>
    </ligand>
</feature>
<feature type="binding site" evidence="1">
    <location>
        <position position="197"/>
    </location>
    <ligand>
        <name>ATP</name>
        <dbReference type="ChEBI" id="CHEBI:30616"/>
    </ligand>
</feature>
<reference key="1">
    <citation type="journal article" date="1998" name="DNA Res.">
        <title>Complete sequence and gene organization of the genome of a hyper-thermophilic archaebacterium, Pyrococcus horikoshii OT3.</title>
        <authorList>
            <person name="Kawarabayasi Y."/>
            <person name="Sawada M."/>
            <person name="Horikawa H."/>
            <person name="Haikawa Y."/>
            <person name="Hino Y."/>
            <person name="Yamamoto S."/>
            <person name="Sekine M."/>
            <person name="Baba S."/>
            <person name="Kosugi H."/>
            <person name="Hosoyama A."/>
            <person name="Nagai Y."/>
            <person name="Sakai M."/>
            <person name="Ogura K."/>
            <person name="Otsuka R."/>
            <person name="Nakazawa H."/>
            <person name="Takamiya M."/>
            <person name="Ohfuku Y."/>
            <person name="Funahashi T."/>
            <person name="Tanaka T."/>
            <person name="Kudoh Y."/>
            <person name="Yamazaki J."/>
            <person name="Kushida N."/>
            <person name="Oguchi A."/>
            <person name="Aoki K."/>
            <person name="Yoshizawa T."/>
            <person name="Nakamura Y."/>
            <person name="Robb F.T."/>
            <person name="Horikoshi K."/>
            <person name="Masuchi Y."/>
            <person name="Shizuya H."/>
            <person name="Kikuchi H."/>
        </authorList>
    </citation>
    <scope>NUCLEOTIDE SEQUENCE [LARGE SCALE GENOMIC DNA]</scope>
    <source>
        <strain>ATCC 700860 / DSM 12428 / JCM 9974 / NBRC 100139 / OT-3</strain>
    </source>
</reference>
<proteinExistence type="inferred from homology"/>
<organism>
    <name type="scientific">Pyrococcus horikoshii (strain ATCC 700860 / DSM 12428 / JCM 9974 / NBRC 100139 / OT-3)</name>
    <dbReference type="NCBI Taxonomy" id="70601"/>
    <lineage>
        <taxon>Archaea</taxon>
        <taxon>Methanobacteriati</taxon>
        <taxon>Methanobacteriota</taxon>
        <taxon>Thermococci</taxon>
        <taxon>Thermococcales</taxon>
        <taxon>Thermococcaceae</taxon>
        <taxon>Pyrococcus</taxon>
    </lineage>
</organism>
<name>KAD_PYRHO</name>
<keyword id="KW-0067">ATP-binding</keyword>
<keyword id="KW-0963">Cytoplasm</keyword>
<keyword id="KW-0418">Kinase</keyword>
<keyword id="KW-0479">Metal-binding</keyword>
<keyword id="KW-0545">Nucleotide biosynthesis</keyword>
<keyword id="KW-0547">Nucleotide-binding</keyword>
<keyword id="KW-0808">Transferase</keyword>
<keyword id="KW-0862">Zinc</keyword>